<name>YSV2_CAEEL</name>
<feature type="chain" id="PRO_0000065469" description="Uncharacterized protein T19C3.2">
    <location>
        <begin position="1"/>
        <end position="218"/>
    </location>
</feature>
<gene>
    <name evidence="1" type="ORF">T19C3.2</name>
</gene>
<keyword id="KW-1185">Reference proteome</keyword>
<reference key="1">
    <citation type="journal article" date="1998" name="Science">
        <title>Genome sequence of the nematode C. elegans: a platform for investigating biology.</title>
        <authorList>
            <consortium name="The C. elegans sequencing consortium"/>
        </authorList>
    </citation>
    <scope>NUCLEOTIDE SEQUENCE [LARGE SCALE GENOMIC DNA]</scope>
    <source>
        <strain>Bristol N2</strain>
    </source>
</reference>
<proteinExistence type="predicted"/>
<accession>Q10008</accession>
<evidence type="ECO:0000312" key="1">
    <source>
        <dbReference type="WormBase" id="T19C3.2"/>
    </source>
</evidence>
<dbReference type="EMBL" id="BX284603">
    <property type="protein sequence ID" value="CCD73734.2"/>
    <property type="molecule type" value="Genomic_DNA"/>
</dbReference>
<dbReference type="PIR" id="T16887">
    <property type="entry name" value="T16887"/>
</dbReference>
<dbReference type="RefSeq" id="NP_001364809.1">
    <property type="nucleotide sequence ID" value="NM_001377916.1"/>
</dbReference>
<dbReference type="RefSeq" id="NP_497220.1">
    <property type="nucleotide sequence ID" value="NM_064819.3"/>
</dbReference>
<dbReference type="FunCoup" id="Q10008">
    <property type="interactions" value="172"/>
</dbReference>
<dbReference type="STRING" id="6239.T19C3.2.1"/>
<dbReference type="PaxDb" id="6239-T19C3.2"/>
<dbReference type="PeptideAtlas" id="Q10008"/>
<dbReference type="EnsemblMetazoa" id="T19C3.2.1">
    <property type="protein sequence ID" value="T19C3.2.1"/>
    <property type="gene ID" value="WBGene00020560"/>
</dbReference>
<dbReference type="GeneID" id="175215"/>
<dbReference type="UCSC" id="T19C3.2">
    <property type="organism name" value="c. elegans"/>
</dbReference>
<dbReference type="AGR" id="WB:WBGene00020560"/>
<dbReference type="WormBase" id="T19C3.2">
    <property type="protein sequence ID" value="CE53863"/>
    <property type="gene ID" value="WBGene00020560"/>
</dbReference>
<dbReference type="eggNOG" id="ENOG502QW12">
    <property type="taxonomic scope" value="Eukaryota"/>
</dbReference>
<dbReference type="GeneTree" id="ENSGT00970000196180"/>
<dbReference type="HOGENOM" id="CLU_090435_0_0_1"/>
<dbReference type="InParanoid" id="Q10008"/>
<dbReference type="OrthoDB" id="5913344at2759"/>
<dbReference type="PhylomeDB" id="Q10008"/>
<dbReference type="PRO" id="PR:Q10008"/>
<dbReference type="Proteomes" id="UP000001940">
    <property type="component" value="Chromosome III"/>
</dbReference>
<dbReference type="Bgee" id="WBGene00020560">
    <property type="expression patterns" value="Expressed in pharyngeal muscle cell (C elegans) and 3 other cell types or tissues"/>
</dbReference>
<dbReference type="InterPro" id="IPR040271">
    <property type="entry name" value="T19C3.2-like"/>
</dbReference>
<dbReference type="PANTHER" id="PTHR37443">
    <property type="entry name" value="PROTEIN CBG09852-RELATED"/>
    <property type="match status" value="1"/>
</dbReference>
<dbReference type="PANTHER" id="PTHR37443:SF2">
    <property type="entry name" value="PROTEIN CBG15264"/>
    <property type="match status" value="1"/>
</dbReference>
<sequence>MTRHFAIFTVFLVGFVLYSECQISAMFGNPIQAANCETWSEWGPCVWLKGKEKRWQRTYFEQLLPGRKGCRNHVFFRLLKDRWGVAFNNFYTYLRDTTTSEEQCGECSYQQSCGRKCHRRGDIGIINPLFVAERKCMGVDQSKACVSTFKQDCKLWPNPEIKLPNVTESMQQIIDNLDYLQCVPEHRPSGSVCRCCCHPYTPNPQTFECELKPYLSGK</sequence>
<protein>
    <recommendedName>
        <fullName>Uncharacterized protein T19C3.2</fullName>
    </recommendedName>
</protein>
<organism>
    <name type="scientific">Caenorhabditis elegans</name>
    <dbReference type="NCBI Taxonomy" id="6239"/>
    <lineage>
        <taxon>Eukaryota</taxon>
        <taxon>Metazoa</taxon>
        <taxon>Ecdysozoa</taxon>
        <taxon>Nematoda</taxon>
        <taxon>Chromadorea</taxon>
        <taxon>Rhabditida</taxon>
        <taxon>Rhabditina</taxon>
        <taxon>Rhabditomorpha</taxon>
        <taxon>Rhabditoidea</taxon>
        <taxon>Rhabditidae</taxon>
        <taxon>Peloderinae</taxon>
        <taxon>Caenorhabditis</taxon>
    </lineage>
</organism>